<gene>
    <name type="ordered locus">Rfer_2190</name>
</gene>
<organism>
    <name type="scientific">Albidiferax ferrireducens (strain ATCC BAA-621 / DSM 15236 / T118)</name>
    <name type="common">Rhodoferax ferrireducens</name>
    <dbReference type="NCBI Taxonomy" id="338969"/>
    <lineage>
        <taxon>Bacteria</taxon>
        <taxon>Pseudomonadati</taxon>
        <taxon>Pseudomonadota</taxon>
        <taxon>Betaproteobacteria</taxon>
        <taxon>Burkholderiales</taxon>
        <taxon>Comamonadaceae</taxon>
        <taxon>Rhodoferax</taxon>
    </lineage>
</organism>
<comment type="function">
    <text evidence="1">Bifunctional serine/threonine kinase and phosphorylase involved in the regulation of the phosphoenolpyruvate synthase (PEPS) by catalyzing its phosphorylation/dephosphorylation.</text>
</comment>
<comment type="catalytic activity">
    <reaction evidence="1">
        <text>[pyruvate, water dikinase] + ADP = [pyruvate, water dikinase]-phosphate + AMP + H(+)</text>
        <dbReference type="Rhea" id="RHEA:46020"/>
        <dbReference type="Rhea" id="RHEA-COMP:11425"/>
        <dbReference type="Rhea" id="RHEA-COMP:11426"/>
        <dbReference type="ChEBI" id="CHEBI:15378"/>
        <dbReference type="ChEBI" id="CHEBI:43176"/>
        <dbReference type="ChEBI" id="CHEBI:68546"/>
        <dbReference type="ChEBI" id="CHEBI:456215"/>
        <dbReference type="ChEBI" id="CHEBI:456216"/>
        <dbReference type="EC" id="2.7.11.33"/>
    </reaction>
</comment>
<comment type="catalytic activity">
    <reaction evidence="1">
        <text>[pyruvate, water dikinase]-phosphate + phosphate + H(+) = [pyruvate, water dikinase] + diphosphate</text>
        <dbReference type="Rhea" id="RHEA:48580"/>
        <dbReference type="Rhea" id="RHEA-COMP:11425"/>
        <dbReference type="Rhea" id="RHEA-COMP:11426"/>
        <dbReference type="ChEBI" id="CHEBI:15378"/>
        <dbReference type="ChEBI" id="CHEBI:33019"/>
        <dbReference type="ChEBI" id="CHEBI:43176"/>
        <dbReference type="ChEBI" id="CHEBI:43474"/>
        <dbReference type="ChEBI" id="CHEBI:68546"/>
        <dbReference type="EC" id="2.7.4.28"/>
    </reaction>
</comment>
<comment type="similarity">
    <text evidence="1">Belongs to the pyruvate, phosphate/water dikinase regulatory protein family. PSRP subfamily.</text>
</comment>
<protein>
    <recommendedName>
        <fullName evidence="1">Putative phosphoenolpyruvate synthase regulatory protein</fullName>
        <shortName evidence="1">PEP synthase regulatory protein</shortName>
        <shortName evidence="1">PSRP</shortName>
        <ecNumber evidence="1">2.7.11.33</ecNumber>
        <ecNumber evidence="1">2.7.4.28</ecNumber>
    </recommendedName>
    <alternativeName>
        <fullName evidence="1">Pyruvate, water dikinase regulatory protein</fullName>
    </alternativeName>
</protein>
<dbReference type="EC" id="2.7.11.33" evidence="1"/>
<dbReference type="EC" id="2.7.4.28" evidence="1"/>
<dbReference type="EMBL" id="CP000267">
    <property type="protein sequence ID" value="ABD69914.1"/>
    <property type="molecule type" value="Genomic_DNA"/>
</dbReference>
<dbReference type="RefSeq" id="WP_011464482.1">
    <property type="nucleotide sequence ID" value="NC_007908.1"/>
</dbReference>
<dbReference type="SMR" id="Q21WD9"/>
<dbReference type="STRING" id="338969.Rfer_2190"/>
<dbReference type="KEGG" id="rfr:Rfer_2190"/>
<dbReference type="eggNOG" id="COG1806">
    <property type="taxonomic scope" value="Bacteria"/>
</dbReference>
<dbReference type="HOGENOM" id="CLU_046206_1_0_4"/>
<dbReference type="OrthoDB" id="9782201at2"/>
<dbReference type="Proteomes" id="UP000008332">
    <property type="component" value="Chromosome"/>
</dbReference>
<dbReference type="GO" id="GO:0043531">
    <property type="term" value="F:ADP binding"/>
    <property type="evidence" value="ECO:0007669"/>
    <property type="project" value="UniProtKB-UniRule"/>
</dbReference>
<dbReference type="GO" id="GO:0005524">
    <property type="term" value="F:ATP binding"/>
    <property type="evidence" value="ECO:0007669"/>
    <property type="project" value="InterPro"/>
</dbReference>
<dbReference type="GO" id="GO:0016776">
    <property type="term" value="F:phosphotransferase activity, phosphate group as acceptor"/>
    <property type="evidence" value="ECO:0007669"/>
    <property type="project" value="UniProtKB-UniRule"/>
</dbReference>
<dbReference type="GO" id="GO:0004674">
    <property type="term" value="F:protein serine/threonine kinase activity"/>
    <property type="evidence" value="ECO:0007669"/>
    <property type="project" value="UniProtKB-UniRule"/>
</dbReference>
<dbReference type="HAMAP" id="MF_01062">
    <property type="entry name" value="PSRP"/>
    <property type="match status" value="1"/>
</dbReference>
<dbReference type="InterPro" id="IPR005177">
    <property type="entry name" value="Kinase-pyrophosphorylase"/>
</dbReference>
<dbReference type="InterPro" id="IPR026530">
    <property type="entry name" value="PSRP"/>
</dbReference>
<dbReference type="NCBIfam" id="NF003742">
    <property type="entry name" value="PRK05339.1"/>
    <property type="match status" value="1"/>
</dbReference>
<dbReference type="PANTHER" id="PTHR31756">
    <property type="entry name" value="PYRUVATE, PHOSPHATE DIKINASE REGULATORY PROTEIN 1, CHLOROPLASTIC"/>
    <property type="match status" value="1"/>
</dbReference>
<dbReference type="PANTHER" id="PTHR31756:SF3">
    <property type="entry name" value="PYRUVATE, PHOSPHATE DIKINASE REGULATORY PROTEIN 1, CHLOROPLASTIC"/>
    <property type="match status" value="1"/>
</dbReference>
<dbReference type="Pfam" id="PF03618">
    <property type="entry name" value="Kinase-PPPase"/>
    <property type="match status" value="1"/>
</dbReference>
<reference key="1">
    <citation type="submission" date="2006-02" db="EMBL/GenBank/DDBJ databases">
        <title>Complete sequence of chromosome of Rhodoferax ferrireducens DSM 15236.</title>
        <authorList>
            <person name="Copeland A."/>
            <person name="Lucas S."/>
            <person name="Lapidus A."/>
            <person name="Barry K."/>
            <person name="Detter J.C."/>
            <person name="Glavina del Rio T."/>
            <person name="Hammon N."/>
            <person name="Israni S."/>
            <person name="Pitluck S."/>
            <person name="Brettin T."/>
            <person name="Bruce D."/>
            <person name="Han C."/>
            <person name="Tapia R."/>
            <person name="Gilna P."/>
            <person name="Kiss H."/>
            <person name="Schmutz J."/>
            <person name="Larimer F."/>
            <person name="Land M."/>
            <person name="Kyrpides N."/>
            <person name="Ivanova N."/>
            <person name="Richardson P."/>
        </authorList>
    </citation>
    <scope>NUCLEOTIDE SEQUENCE [LARGE SCALE GENOMIC DNA]</scope>
    <source>
        <strain>ATCC BAA-621 / DSM 15236 / T118</strain>
    </source>
</reference>
<accession>Q21WD9</accession>
<name>PSRP_ALBFT</name>
<feature type="chain" id="PRO_0000316724" description="Putative phosphoenolpyruvate synthase regulatory protein">
    <location>
        <begin position="1"/>
        <end position="273"/>
    </location>
</feature>
<feature type="binding site" evidence="1">
    <location>
        <begin position="153"/>
        <end position="160"/>
    </location>
    <ligand>
        <name>ADP</name>
        <dbReference type="ChEBI" id="CHEBI:456216"/>
    </ligand>
</feature>
<keyword id="KW-0418">Kinase</keyword>
<keyword id="KW-0547">Nucleotide-binding</keyword>
<keyword id="KW-1185">Reference proteome</keyword>
<keyword id="KW-0723">Serine/threonine-protein kinase</keyword>
<keyword id="KW-0808">Transferase</keyword>
<sequence>MSQRTVFFISDGTGITAETFGNAILAQFETNFRHVRLPFTDSVDKAHQAVREINHAGIVDGNKSIVFTTLVDMEVLKVITDNCHGMVLDMFSTFVHPLESELNLKSSHRIGRFTDASKSSAYQSRIEAINFSLAHDDGQSNTDLEHSDIILVGVSRSGKTPTSLYLAMQYGLKASNYPLIPDDFERQQLPPALKAHKSKLFGLTIQPERLSEIRNERRPNSKYASLENCRMEVSEAEAMMRRSGIRWLSTTTKSIEEISTTILQEIRPERLAY</sequence>
<evidence type="ECO:0000255" key="1">
    <source>
        <dbReference type="HAMAP-Rule" id="MF_01062"/>
    </source>
</evidence>
<proteinExistence type="inferred from homology"/>